<reference evidence="5" key="1">
    <citation type="journal article" date="2012" name="Syst. Biol.">
        <title>Peptidomics-based phylogeny and biogeography of Mantophasmatodea (Hexapoda).</title>
        <authorList>
            <person name="Predel R."/>
            <person name="Neupert S."/>
            <person name="Huetteroth W."/>
            <person name="Kahnt J."/>
            <person name="Waidelich D."/>
            <person name="Roth S."/>
        </authorList>
    </citation>
    <scope>PROTEIN SEQUENCE</scope>
    <scope>AMIDATION AT LEU-9</scope>
    <source>
        <tissue evidence="3">Thoracic perisympathetic organs</tissue>
    </source>
</reference>
<evidence type="ECO:0000250" key="1">
    <source>
        <dbReference type="UniProtKB" id="P34405"/>
    </source>
</evidence>
<evidence type="ECO:0000255" key="2"/>
<evidence type="ECO:0000269" key="3">
    <source>
    </source>
</evidence>
<evidence type="ECO:0000303" key="4">
    <source>
    </source>
</evidence>
<evidence type="ECO:0000305" key="5"/>
<evidence type="ECO:0000305" key="6">
    <source>
    </source>
</evidence>
<feature type="peptide" id="PRO_0000421527" description="Extended FMRFamide-7" evidence="3">
    <location>
        <begin position="1"/>
        <end position="9"/>
    </location>
</feature>
<feature type="modified residue" description="Leucine amide" evidence="3">
    <location>
        <position position="9"/>
    </location>
</feature>
<feature type="unsure residue" description="L or I" evidence="3">
    <location>
        <position position="9"/>
    </location>
</feature>
<organism>
    <name type="scientific">Praedatophasma maraisi</name>
    <name type="common">Gladiator</name>
    <name type="synonym">Heel-walker</name>
    <dbReference type="NCBI Taxonomy" id="409170"/>
    <lineage>
        <taxon>Eukaryota</taxon>
        <taxon>Metazoa</taxon>
        <taxon>Ecdysozoa</taxon>
        <taxon>Arthropoda</taxon>
        <taxon>Hexapoda</taxon>
        <taxon>Insecta</taxon>
        <taxon>Pterygota</taxon>
        <taxon>Neoptera</taxon>
        <taxon>Polyneoptera</taxon>
        <taxon>Mantophasmatodea</taxon>
        <taxon>Mantophasmatidae</taxon>
        <taxon>Praedatophasma</taxon>
    </lineage>
</organism>
<comment type="function">
    <text evidence="1">FMRFamides and FMRFamide-like peptides are neuropeptides.</text>
</comment>
<comment type="subcellular location">
    <subcellularLocation>
        <location evidence="6">Secreted</location>
    </subcellularLocation>
</comment>
<comment type="similarity">
    <text evidence="2">Belongs to the FARP (FMRF amide related peptide) family.</text>
</comment>
<accession>B3A0G3</accession>
<name>FAR7_PRAMA</name>
<proteinExistence type="evidence at protein level"/>
<dbReference type="GO" id="GO:0005576">
    <property type="term" value="C:extracellular region"/>
    <property type="evidence" value="ECO:0007669"/>
    <property type="project" value="UniProtKB-SubCell"/>
</dbReference>
<dbReference type="GO" id="GO:0007218">
    <property type="term" value="P:neuropeptide signaling pathway"/>
    <property type="evidence" value="ECO:0007669"/>
    <property type="project" value="UniProtKB-KW"/>
</dbReference>
<keyword id="KW-0027">Amidation</keyword>
<keyword id="KW-0903">Direct protein sequencing</keyword>
<keyword id="KW-0527">Neuropeptide</keyword>
<keyword id="KW-0964">Secreted</keyword>
<protein>
    <recommendedName>
        <fullName evidence="4">Extended FMRFamide-7</fullName>
        <shortName evidence="4">FMRFa-7</shortName>
    </recommendedName>
</protein>
<sequence>ARSDNFVRL</sequence>